<feature type="signal peptide" evidence="2">
    <location>
        <begin position="1"/>
        <end position="20"/>
    </location>
</feature>
<feature type="chain" id="PRO_0000016172" description="Insulin-like peptide INSL6">
    <location>
        <begin position="21"/>
        <end position="213"/>
    </location>
</feature>
<feature type="peptide" id="PRO_0000016173" description="Insulin-like peptide INSL6 B chain" evidence="2">
    <location>
        <begin position="21"/>
        <end position="53"/>
    </location>
</feature>
<feature type="propeptide" id="PRO_0000016174" description="Connecting peptide" evidence="2">
    <location>
        <begin position="55"/>
        <end position="168"/>
    </location>
</feature>
<feature type="peptide" id="PRO_0000016175" description="Insulin-like peptide INSL6 A chain" evidence="2">
    <location>
        <begin position="173"/>
        <end position="198"/>
    </location>
</feature>
<feature type="propeptide" id="PRO_0000016176" evidence="2">
    <location>
        <begin position="201"/>
        <end position="213"/>
    </location>
</feature>
<feature type="disulfide bond" evidence="1">
    <location>
        <begin position="33"/>
        <end position="179"/>
    </location>
</feature>
<feature type="disulfide bond" evidence="1">
    <location>
        <begin position="45"/>
        <end position="192"/>
    </location>
</feature>
<feature type="disulfide bond" evidence="1">
    <location>
        <begin position="178"/>
        <end position="183"/>
    </location>
</feature>
<feature type="sequence variant" id="VAR_024329" description="In dbSNP:rs2149554.">
    <original>F</original>
    <variation>L</variation>
    <location>
        <position position="80"/>
    </location>
</feature>
<feature type="sequence conflict" description="In Ref. 2; AAD39003." evidence="3" ref="2">
    <original>K</original>
    <variation>F</variation>
    <location>
        <position position="146"/>
    </location>
</feature>
<proteinExistence type="evidence at protein level"/>
<gene>
    <name type="primary">INSL6</name>
    <name type="synonym">RIF1</name>
</gene>
<evidence type="ECO:0000250" key="1"/>
<evidence type="ECO:0000255" key="2"/>
<evidence type="ECO:0000305" key="3"/>
<sequence>MPRLLRLSLLWLGLLLVRFSRELSDISSARKLCGRYLVKEIEKLCGHANWSQFRFEEETPFSRLIAQASEKVEAYSPYQFESPQTASPARGRGTNPVSTSWEEAVNSWEMQSLPEYKDKKGYSPLGKTREFSSSHNINVYIHENAKFQKKRRNKIKTLSNLFWGHHPQRKRRGYSEKCCLTGCTKEELSIACLPYIDFKRLKEKRSSLVTKIY</sequence>
<name>INSL6_HUMAN</name>
<dbReference type="EMBL" id="AF135824">
    <property type="protein sequence ID" value="AAF29604.1"/>
    <property type="molecule type" value="mRNA"/>
</dbReference>
<dbReference type="EMBL" id="AF156094">
    <property type="protein sequence ID" value="AAD39003.1"/>
    <property type="molecule type" value="mRNA"/>
</dbReference>
<dbReference type="EMBL" id="AL161450">
    <property type="status" value="NOT_ANNOTATED_CDS"/>
    <property type="molecule type" value="Genomic_DNA"/>
</dbReference>
<dbReference type="EMBL" id="BC126473">
    <property type="protein sequence ID" value="AAI26474.1"/>
    <property type="molecule type" value="mRNA"/>
</dbReference>
<dbReference type="EMBL" id="BC126475">
    <property type="protein sequence ID" value="AAI26476.1"/>
    <property type="molecule type" value="mRNA"/>
</dbReference>
<dbReference type="CCDS" id="CCDS6458.1"/>
<dbReference type="RefSeq" id="NP_009110.2">
    <property type="nucleotide sequence ID" value="NM_007179.2"/>
</dbReference>
<dbReference type="SMR" id="Q9Y581"/>
<dbReference type="BioGRID" id="116343">
    <property type="interactions" value="27"/>
</dbReference>
<dbReference type="FunCoup" id="Q9Y581">
    <property type="interactions" value="19"/>
</dbReference>
<dbReference type="IntAct" id="Q9Y581">
    <property type="interactions" value="24"/>
</dbReference>
<dbReference type="STRING" id="9606.ENSP00000371054"/>
<dbReference type="PhosphoSitePlus" id="Q9Y581"/>
<dbReference type="SwissPalm" id="Q9Y581"/>
<dbReference type="BioMuta" id="INSL6"/>
<dbReference type="DMDM" id="20178309"/>
<dbReference type="MassIVE" id="Q9Y581"/>
<dbReference type="PaxDb" id="9606-ENSP00000371054"/>
<dbReference type="PeptideAtlas" id="Q9Y581"/>
<dbReference type="ProteomicsDB" id="86312"/>
<dbReference type="Antibodypedia" id="9538">
    <property type="antibodies" value="40 antibodies from 14 providers"/>
</dbReference>
<dbReference type="DNASU" id="11172"/>
<dbReference type="Ensembl" id="ENST00000381641.4">
    <property type="protein sequence ID" value="ENSP00000371054.3"/>
    <property type="gene ID" value="ENSG00000120210.8"/>
</dbReference>
<dbReference type="GeneID" id="11172"/>
<dbReference type="KEGG" id="hsa:11172"/>
<dbReference type="MANE-Select" id="ENST00000381641.4">
    <property type="protein sequence ID" value="ENSP00000371054.3"/>
    <property type="RefSeq nucleotide sequence ID" value="NM_007179.3"/>
    <property type="RefSeq protein sequence ID" value="NP_009110.2"/>
</dbReference>
<dbReference type="UCSC" id="uc003zix.4">
    <property type="organism name" value="human"/>
</dbReference>
<dbReference type="AGR" id="HGNC:6089"/>
<dbReference type="CTD" id="11172"/>
<dbReference type="DisGeNET" id="11172"/>
<dbReference type="GeneCards" id="INSL6"/>
<dbReference type="HGNC" id="HGNC:6089">
    <property type="gene designation" value="INSL6"/>
</dbReference>
<dbReference type="HPA" id="ENSG00000120210">
    <property type="expression patterns" value="Group enriched (retina, testis)"/>
</dbReference>
<dbReference type="MalaCards" id="INSL6"/>
<dbReference type="MIM" id="606414">
    <property type="type" value="gene"/>
</dbReference>
<dbReference type="neXtProt" id="NX_Q9Y581"/>
<dbReference type="OpenTargets" id="ENSG00000120210"/>
<dbReference type="PharmGKB" id="PA29896"/>
<dbReference type="VEuPathDB" id="HostDB:ENSG00000120210"/>
<dbReference type="eggNOG" id="ENOG502RWPT">
    <property type="taxonomic scope" value="Eukaryota"/>
</dbReference>
<dbReference type="GeneTree" id="ENSGT00940000154434"/>
<dbReference type="HOGENOM" id="CLU_1299356_0_0_1"/>
<dbReference type="InParanoid" id="Q9Y581"/>
<dbReference type="OMA" id="SIACFPY"/>
<dbReference type="OrthoDB" id="9659760at2759"/>
<dbReference type="PAN-GO" id="Q9Y581">
    <property type="GO annotations" value="0 GO annotations based on evolutionary models"/>
</dbReference>
<dbReference type="PhylomeDB" id="Q9Y581"/>
<dbReference type="TreeFam" id="TF343788"/>
<dbReference type="PathwayCommons" id="Q9Y581"/>
<dbReference type="SignaLink" id="Q9Y581"/>
<dbReference type="BioGRID-ORCS" id="11172">
    <property type="hits" value="14 hits in 1133 CRISPR screens"/>
</dbReference>
<dbReference type="ChiTaRS" id="INSL6">
    <property type="organism name" value="human"/>
</dbReference>
<dbReference type="GenomeRNAi" id="11172"/>
<dbReference type="Pharos" id="Q9Y581">
    <property type="development level" value="Tdark"/>
</dbReference>
<dbReference type="PRO" id="PR:Q9Y581"/>
<dbReference type="Proteomes" id="UP000005640">
    <property type="component" value="Chromosome 9"/>
</dbReference>
<dbReference type="RNAct" id="Q9Y581">
    <property type="molecule type" value="protein"/>
</dbReference>
<dbReference type="Bgee" id="ENSG00000120210">
    <property type="expression patterns" value="Expressed in male germ line stem cell (sensu Vertebrata) in testis and 95 other cell types or tissues"/>
</dbReference>
<dbReference type="ExpressionAtlas" id="Q9Y581">
    <property type="expression patterns" value="baseline and differential"/>
</dbReference>
<dbReference type="GO" id="GO:0005576">
    <property type="term" value="C:extracellular region"/>
    <property type="evidence" value="ECO:0007669"/>
    <property type="project" value="UniProtKB-SubCell"/>
</dbReference>
<dbReference type="GO" id="GO:0005179">
    <property type="term" value="F:hormone activity"/>
    <property type="evidence" value="ECO:0000303"/>
    <property type="project" value="UniProtKB"/>
</dbReference>
<dbReference type="CDD" id="cd04365">
    <property type="entry name" value="IlGF_relaxin_like"/>
    <property type="match status" value="1"/>
</dbReference>
<dbReference type="Gene3D" id="1.10.100.10">
    <property type="entry name" value="Insulin-like"/>
    <property type="match status" value="1"/>
</dbReference>
<dbReference type="InterPro" id="IPR016179">
    <property type="entry name" value="Insulin-like"/>
</dbReference>
<dbReference type="InterPro" id="IPR017100">
    <property type="entry name" value="Insulin-like_pep_6"/>
</dbReference>
<dbReference type="InterPro" id="IPR036438">
    <property type="entry name" value="Insulin-like_sf"/>
</dbReference>
<dbReference type="InterPro" id="IPR022353">
    <property type="entry name" value="Insulin_CS"/>
</dbReference>
<dbReference type="InterPro" id="IPR051042">
    <property type="entry name" value="Repro_Hormone_Insulin-like"/>
</dbReference>
<dbReference type="PANTHER" id="PTHR12004:SF1">
    <property type="entry name" value="INSULIN-LIKE PEPTIDE INSL6"/>
    <property type="match status" value="1"/>
</dbReference>
<dbReference type="PANTHER" id="PTHR12004">
    <property type="entry name" value="RELAXIN"/>
    <property type="match status" value="1"/>
</dbReference>
<dbReference type="Pfam" id="PF00049">
    <property type="entry name" value="Insulin"/>
    <property type="match status" value="1"/>
</dbReference>
<dbReference type="PIRSF" id="PIRSF037062">
    <property type="entry name" value="Insulin-like_peptide_6"/>
    <property type="match status" value="1"/>
</dbReference>
<dbReference type="SMART" id="SM00078">
    <property type="entry name" value="IlGF"/>
    <property type="match status" value="1"/>
</dbReference>
<dbReference type="SUPFAM" id="SSF56994">
    <property type="entry name" value="Insulin-like"/>
    <property type="match status" value="1"/>
</dbReference>
<dbReference type="PROSITE" id="PS00262">
    <property type="entry name" value="INSULIN"/>
    <property type="match status" value="1"/>
</dbReference>
<organism>
    <name type="scientific">Homo sapiens</name>
    <name type="common">Human</name>
    <dbReference type="NCBI Taxonomy" id="9606"/>
    <lineage>
        <taxon>Eukaryota</taxon>
        <taxon>Metazoa</taxon>
        <taxon>Chordata</taxon>
        <taxon>Craniata</taxon>
        <taxon>Vertebrata</taxon>
        <taxon>Euteleostomi</taxon>
        <taxon>Mammalia</taxon>
        <taxon>Eutheria</taxon>
        <taxon>Euarchontoglires</taxon>
        <taxon>Primates</taxon>
        <taxon>Haplorrhini</taxon>
        <taxon>Catarrhini</taxon>
        <taxon>Hominidae</taxon>
        <taxon>Homo</taxon>
    </lineage>
</organism>
<keyword id="KW-0165">Cleavage on pair of basic residues</keyword>
<keyword id="KW-1015">Disulfide bond</keyword>
<keyword id="KW-0372">Hormone</keyword>
<keyword id="KW-1267">Proteomics identification</keyword>
<keyword id="KW-1185">Reference proteome</keyword>
<keyword id="KW-0964">Secreted</keyword>
<keyword id="KW-0732">Signal</keyword>
<protein>
    <recommendedName>
        <fullName>Insulin-like peptide INSL6</fullName>
        <shortName>Insulin-like peptide 6</shortName>
    </recommendedName>
    <alternativeName>
        <fullName>Relaxin/insulin-like factor 1</fullName>
    </alternativeName>
    <component>
        <recommendedName>
            <fullName>Insulin-like peptide INSL6 B chain</fullName>
        </recommendedName>
    </component>
    <component>
        <recommendedName>
            <fullName>Insulin-like peptide INSL6 A chain</fullName>
        </recommendedName>
    </component>
</protein>
<reference key="1">
    <citation type="journal article" date="1999" name="Mol. Endocrinol.">
        <title>Cloning of two novel mammalian paralogs of relaxin/insulin family proteins and their expression in testis and kidney.</title>
        <authorList>
            <person name="Hsu S.Y."/>
        </authorList>
    </citation>
    <scope>NUCLEOTIDE SEQUENCE [MRNA]</scope>
    <source>
        <tissue>Testis</tissue>
    </source>
</reference>
<reference key="2">
    <citation type="journal article" date="2000" name="Biol. Reprod.">
        <title>Identification of INSL6, a new member of the insulin family that is expressed in the testis of the human and Rat.</title>
        <authorList>
            <person name="Lok S."/>
            <person name="Johnston D.S."/>
            <person name="Conklin D."/>
            <person name="Lofton-Day C.E."/>
            <person name="Adams R.L."/>
            <person name="Jelmberg A.C."/>
            <person name="Whitmore T.E."/>
            <person name="Schrader S."/>
            <person name="Griswold M.D."/>
            <person name="Jaspers S.R."/>
        </authorList>
    </citation>
    <scope>NUCLEOTIDE SEQUENCE [MRNA]</scope>
    <source>
        <tissue>Testis</tissue>
    </source>
</reference>
<reference key="3">
    <citation type="journal article" date="2004" name="Nature">
        <title>DNA sequence and analysis of human chromosome 9.</title>
        <authorList>
            <person name="Humphray S.J."/>
            <person name="Oliver K."/>
            <person name="Hunt A.R."/>
            <person name="Plumb R.W."/>
            <person name="Loveland J.E."/>
            <person name="Howe K.L."/>
            <person name="Andrews T.D."/>
            <person name="Searle S."/>
            <person name="Hunt S.E."/>
            <person name="Scott C.E."/>
            <person name="Jones M.C."/>
            <person name="Ainscough R."/>
            <person name="Almeida J.P."/>
            <person name="Ambrose K.D."/>
            <person name="Ashwell R.I.S."/>
            <person name="Babbage A.K."/>
            <person name="Babbage S."/>
            <person name="Bagguley C.L."/>
            <person name="Bailey J."/>
            <person name="Banerjee R."/>
            <person name="Barker D.J."/>
            <person name="Barlow K.F."/>
            <person name="Bates K."/>
            <person name="Beasley H."/>
            <person name="Beasley O."/>
            <person name="Bird C.P."/>
            <person name="Bray-Allen S."/>
            <person name="Brown A.J."/>
            <person name="Brown J.Y."/>
            <person name="Burford D."/>
            <person name="Burrill W."/>
            <person name="Burton J."/>
            <person name="Carder C."/>
            <person name="Carter N.P."/>
            <person name="Chapman J.C."/>
            <person name="Chen Y."/>
            <person name="Clarke G."/>
            <person name="Clark S.Y."/>
            <person name="Clee C.M."/>
            <person name="Clegg S."/>
            <person name="Collier R.E."/>
            <person name="Corby N."/>
            <person name="Crosier M."/>
            <person name="Cummings A.T."/>
            <person name="Davies J."/>
            <person name="Dhami P."/>
            <person name="Dunn M."/>
            <person name="Dutta I."/>
            <person name="Dyer L.W."/>
            <person name="Earthrowl M.E."/>
            <person name="Faulkner L."/>
            <person name="Fleming C.J."/>
            <person name="Frankish A."/>
            <person name="Frankland J.A."/>
            <person name="French L."/>
            <person name="Fricker D.G."/>
            <person name="Garner P."/>
            <person name="Garnett J."/>
            <person name="Ghori J."/>
            <person name="Gilbert J.G.R."/>
            <person name="Glison C."/>
            <person name="Grafham D.V."/>
            <person name="Gribble S."/>
            <person name="Griffiths C."/>
            <person name="Griffiths-Jones S."/>
            <person name="Grocock R."/>
            <person name="Guy J."/>
            <person name="Hall R.E."/>
            <person name="Hammond S."/>
            <person name="Harley J.L."/>
            <person name="Harrison E.S.I."/>
            <person name="Hart E.A."/>
            <person name="Heath P.D."/>
            <person name="Henderson C.D."/>
            <person name="Hopkins B.L."/>
            <person name="Howard P.J."/>
            <person name="Howden P.J."/>
            <person name="Huckle E."/>
            <person name="Johnson C."/>
            <person name="Johnson D."/>
            <person name="Joy A.A."/>
            <person name="Kay M."/>
            <person name="Keenan S."/>
            <person name="Kershaw J.K."/>
            <person name="Kimberley A.M."/>
            <person name="King A."/>
            <person name="Knights A."/>
            <person name="Laird G.K."/>
            <person name="Langford C."/>
            <person name="Lawlor S."/>
            <person name="Leongamornlert D.A."/>
            <person name="Leversha M."/>
            <person name="Lloyd C."/>
            <person name="Lloyd D.M."/>
            <person name="Lovell J."/>
            <person name="Martin S."/>
            <person name="Mashreghi-Mohammadi M."/>
            <person name="Matthews L."/>
            <person name="McLaren S."/>
            <person name="McLay K.E."/>
            <person name="McMurray A."/>
            <person name="Milne S."/>
            <person name="Nickerson T."/>
            <person name="Nisbett J."/>
            <person name="Nordsiek G."/>
            <person name="Pearce A.V."/>
            <person name="Peck A.I."/>
            <person name="Porter K.M."/>
            <person name="Pandian R."/>
            <person name="Pelan S."/>
            <person name="Phillimore B."/>
            <person name="Povey S."/>
            <person name="Ramsey Y."/>
            <person name="Rand V."/>
            <person name="Scharfe M."/>
            <person name="Sehra H.K."/>
            <person name="Shownkeen R."/>
            <person name="Sims S.K."/>
            <person name="Skuce C.D."/>
            <person name="Smith M."/>
            <person name="Steward C.A."/>
            <person name="Swarbreck D."/>
            <person name="Sycamore N."/>
            <person name="Tester J."/>
            <person name="Thorpe A."/>
            <person name="Tracey A."/>
            <person name="Tromans A."/>
            <person name="Thomas D.W."/>
            <person name="Wall M."/>
            <person name="Wallis J.M."/>
            <person name="West A.P."/>
            <person name="Whitehead S.L."/>
            <person name="Willey D.L."/>
            <person name="Williams S.A."/>
            <person name="Wilming L."/>
            <person name="Wray P.W."/>
            <person name="Young L."/>
            <person name="Ashurst J.L."/>
            <person name="Coulson A."/>
            <person name="Blocker H."/>
            <person name="Durbin R.M."/>
            <person name="Sulston J.E."/>
            <person name="Hubbard T."/>
            <person name="Jackson M.J."/>
            <person name="Bentley D.R."/>
            <person name="Beck S."/>
            <person name="Rogers J."/>
            <person name="Dunham I."/>
        </authorList>
    </citation>
    <scope>NUCLEOTIDE SEQUENCE [LARGE SCALE GENOMIC DNA]</scope>
</reference>
<reference key="4">
    <citation type="journal article" date="2004" name="Genome Res.">
        <title>The status, quality, and expansion of the NIH full-length cDNA project: the Mammalian Gene Collection (MGC).</title>
        <authorList>
            <consortium name="The MGC Project Team"/>
        </authorList>
    </citation>
    <scope>NUCLEOTIDE SEQUENCE [LARGE SCALE MRNA]</scope>
</reference>
<comment type="function">
    <text>May have a role in sperm development and fertilization.</text>
</comment>
<comment type="subcellular location">
    <subcellularLocation>
        <location evidence="1">Secreted</location>
    </subcellularLocation>
</comment>
<comment type="tissue specificity">
    <text>Testis specific.</text>
</comment>
<comment type="similarity">
    <text evidence="3">Belongs to the insulin family.</text>
</comment>
<accession>Q9Y581</accession>
<accession>A0AVS0</accession>
<accession>Q9NS16</accession>